<dbReference type="EC" id="3.1.2.4"/>
<dbReference type="EMBL" id="AAFI02000003">
    <property type="protein sequence ID" value="EAL73221.1"/>
    <property type="molecule type" value="Genomic_DNA"/>
</dbReference>
<dbReference type="RefSeq" id="XP_647108.1">
    <property type="nucleotide sequence ID" value="XM_642016.1"/>
</dbReference>
<dbReference type="SMR" id="Q55GS6"/>
<dbReference type="FunCoup" id="Q55GS6">
    <property type="interactions" value="350"/>
</dbReference>
<dbReference type="STRING" id="44689.Q55GS6"/>
<dbReference type="PaxDb" id="44689-DDB0233831"/>
<dbReference type="EnsemblProtists" id="EAL73221">
    <property type="protein sequence ID" value="EAL73221"/>
    <property type="gene ID" value="DDB_G0267536"/>
</dbReference>
<dbReference type="GeneID" id="8615912"/>
<dbReference type="KEGG" id="ddi:DDB_G0267536"/>
<dbReference type="dictyBase" id="DDB_G0267536">
    <property type="gene designation" value="hibch"/>
</dbReference>
<dbReference type="VEuPathDB" id="AmoebaDB:DDB_G0267536"/>
<dbReference type="eggNOG" id="KOG1684">
    <property type="taxonomic scope" value="Eukaryota"/>
</dbReference>
<dbReference type="HOGENOM" id="CLU_009834_22_1_1"/>
<dbReference type="InParanoid" id="Q55GS6"/>
<dbReference type="OMA" id="EVFTMEY"/>
<dbReference type="PhylomeDB" id="Q55GS6"/>
<dbReference type="Reactome" id="R-DDI-70895">
    <property type="pathway name" value="Branched-chain amino acid catabolism"/>
</dbReference>
<dbReference type="UniPathway" id="UPA00362"/>
<dbReference type="PRO" id="PR:Q55GS6"/>
<dbReference type="Proteomes" id="UP000002195">
    <property type="component" value="Chromosome 1"/>
</dbReference>
<dbReference type="GO" id="GO:0005739">
    <property type="term" value="C:mitochondrion"/>
    <property type="evidence" value="ECO:0000318"/>
    <property type="project" value="GO_Central"/>
</dbReference>
<dbReference type="GO" id="GO:0003860">
    <property type="term" value="F:3-hydroxyisobutyryl-CoA hydrolase activity"/>
    <property type="evidence" value="ECO:0000250"/>
    <property type="project" value="dictyBase"/>
</dbReference>
<dbReference type="GO" id="GO:0006574">
    <property type="term" value="P:valine catabolic process"/>
    <property type="evidence" value="ECO:0000318"/>
    <property type="project" value="GO_Central"/>
</dbReference>
<dbReference type="CDD" id="cd06558">
    <property type="entry name" value="crotonase-like"/>
    <property type="match status" value="1"/>
</dbReference>
<dbReference type="FunFam" id="3.90.226.10:FF:000026">
    <property type="entry name" value="3-hydroxyisobutyryl-CoA hydrolase, mitochondrial"/>
    <property type="match status" value="1"/>
</dbReference>
<dbReference type="Gene3D" id="3.90.226.10">
    <property type="entry name" value="2-enoyl-CoA Hydratase, Chain A, domain 1"/>
    <property type="match status" value="1"/>
</dbReference>
<dbReference type="InterPro" id="IPR029045">
    <property type="entry name" value="ClpP/crotonase-like_dom_sf"/>
</dbReference>
<dbReference type="InterPro" id="IPR045004">
    <property type="entry name" value="ECH_dom"/>
</dbReference>
<dbReference type="InterPro" id="IPR032259">
    <property type="entry name" value="HIBYL-CoA-H"/>
</dbReference>
<dbReference type="NCBIfam" id="NF004127">
    <property type="entry name" value="PRK05617.1"/>
    <property type="match status" value="1"/>
</dbReference>
<dbReference type="PANTHER" id="PTHR43176:SF3">
    <property type="entry name" value="3-HYDROXYISOBUTYRYL-COA HYDROLASE, MITOCHONDRIAL"/>
    <property type="match status" value="1"/>
</dbReference>
<dbReference type="PANTHER" id="PTHR43176">
    <property type="entry name" value="3-HYDROXYISOBUTYRYL-COA HYDROLASE-RELATED"/>
    <property type="match status" value="1"/>
</dbReference>
<dbReference type="Pfam" id="PF16113">
    <property type="entry name" value="ECH_2"/>
    <property type="match status" value="1"/>
</dbReference>
<dbReference type="SUPFAM" id="SSF52096">
    <property type="entry name" value="ClpP/crotonase"/>
    <property type="match status" value="1"/>
</dbReference>
<organism>
    <name type="scientific">Dictyostelium discoideum</name>
    <name type="common">Social amoeba</name>
    <dbReference type="NCBI Taxonomy" id="44689"/>
    <lineage>
        <taxon>Eukaryota</taxon>
        <taxon>Amoebozoa</taxon>
        <taxon>Evosea</taxon>
        <taxon>Eumycetozoa</taxon>
        <taxon>Dictyostelia</taxon>
        <taxon>Dictyosteliales</taxon>
        <taxon>Dictyosteliaceae</taxon>
        <taxon>Dictyostelium</taxon>
    </lineage>
</organism>
<accession>Q55GS6</accession>
<gene>
    <name type="primary">hibch</name>
    <name type="ORF">DDB_G0267536</name>
</gene>
<sequence length="381" mass="42882">MDRLLTISNHIGKNIRQFSTSTEEVLFEKKGKCLKVLLNRPKALNALNPNMVKILTPKYLEMKTKKDGEGVIVMKGAGEKAFCAGGDIRAIYDYKQLNEEQKSKTNDIGDLFFREEYILNNLIGTNPIAQVSIYNGFAMGGGIGLSVHGKFRVATENTVFAMPETGIGFFCDVGGSYFLPRLPNNYGMYLALTGSKLKGNNVYLAGVATHFVSNEHIQALEKEIEECENPTSQTINSILTKYHDKSKSTSNEYNDNLGDIERIFGKNSVKEIFEQLELLENSEWAKQTLKTLKSVSPSSLMVVFEQMKQGAKLPSLAKCLEMEFRISQHFLEKPDFFEGVRALLVDKDKNPKWLPPSIDQIDQTLVNSYFKPLSNNKELKF</sequence>
<keyword id="KW-0101">Branched-chain amino acid catabolism</keyword>
<keyword id="KW-0378">Hydrolase</keyword>
<keyword id="KW-0496">Mitochondrion</keyword>
<keyword id="KW-1185">Reference proteome</keyword>
<keyword id="KW-0809">Transit peptide</keyword>
<reference key="1">
    <citation type="journal article" date="2005" name="Nature">
        <title>The genome of the social amoeba Dictyostelium discoideum.</title>
        <authorList>
            <person name="Eichinger L."/>
            <person name="Pachebat J.A."/>
            <person name="Gloeckner G."/>
            <person name="Rajandream M.A."/>
            <person name="Sucgang R."/>
            <person name="Berriman M."/>
            <person name="Song J."/>
            <person name="Olsen R."/>
            <person name="Szafranski K."/>
            <person name="Xu Q."/>
            <person name="Tunggal B."/>
            <person name="Kummerfeld S."/>
            <person name="Madera M."/>
            <person name="Konfortov B.A."/>
            <person name="Rivero F."/>
            <person name="Bankier A.T."/>
            <person name="Lehmann R."/>
            <person name="Hamlin N."/>
            <person name="Davies R."/>
            <person name="Gaudet P."/>
            <person name="Fey P."/>
            <person name="Pilcher K."/>
            <person name="Chen G."/>
            <person name="Saunders D."/>
            <person name="Sodergren E.J."/>
            <person name="Davis P."/>
            <person name="Kerhornou A."/>
            <person name="Nie X."/>
            <person name="Hall N."/>
            <person name="Anjard C."/>
            <person name="Hemphill L."/>
            <person name="Bason N."/>
            <person name="Farbrother P."/>
            <person name="Desany B."/>
            <person name="Just E."/>
            <person name="Morio T."/>
            <person name="Rost R."/>
            <person name="Churcher C.M."/>
            <person name="Cooper J."/>
            <person name="Haydock S."/>
            <person name="van Driessche N."/>
            <person name="Cronin A."/>
            <person name="Goodhead I."/>
            <person name="Muzny D.M."/>
            <person name="Mourier T."/>
            <person name="Pain A."/>
            <person name="Lu M."/>
            <person name="Harper D."/>
            <person name="Lindsay R."/>
            <person name="Hauser H."/>
            <person name="James K.D."/>
            <person name="Quiles M."/>
            <person name="Madan Babu M."/>
            <person name="Saito T."/>
            <person name="Buchrieser C."/>
            <person name="Wardroper A."/>
            <person name="Felder M."/>
            <person name="Thangavelu M."/>
            <person name="Johnson D."/>
            <person name="Knights A."/>
            <person name="Loulseged H."/>
            <person name="Mungall K.L."/>
            <person name="Oliver K."/>
            <person name="Price C."/>
            <person name="Quail M.A."/>
            <person name="Urushihara H."/>
            <person name="Hernandez J."/>
            <person name="Rabbinowitsch E."/>
            <person name="Steffen D."/>
            <person name="Sanders M."/>
            <person name="Ma J."/>
            <person name="Kohara Y."/>
            <person name="Sharp S."/>
            <person name="Simmonds M.N."/>
            <person name="Spiegler S."/>
            <person name="Tivey A."/>
            <person name="Sugano S."/>
            <person name="White B."/>
            <person name="Walker D."/>
            <person name="Woodward J.R."/>
            <person name="Winckler T."/>
            <person name="Tanaka Y."/>
            <person name="Shaulsky G."/>
            <person name="Schleicher M."/>
            <person name="Weinstock G.M."/>
            <person name="Rosenthal A."/>
            <person name="Cox E.C."/>
            <person name="Chisholm R.L."/>
            <person name="Gibbs R.A."/>
            <person name="Loomis W.F."/>
            <person name="Platzer M."/>
            <person name="Kay R.R."/>
            <person name="Williams J.G."/>
            <person name="Dear P.H."/>
            <person name="Noegel A.A."/>
            <person name="Barrell B.G."/>
            <person name="Kuspa A."/>
        </authorList>
    </citation>
    <scope>NUCLEOTIDE SEQUENCE [LARGE SCALE GENOMIC DNA]</scope>
    <source>
        <strain>AX4</strain>
    </source>
</reference>
<protein>
    <recommendedName>
        <fullName>3-hydroxyisobutyryl-CoA hydrolase, mitochondrial</fullName>
        <ecNumber>3.1.2.4</ecNumber>
    </recommendedName>
    <alternativeName>
        <fullName>3-hydroxyisobutyryl-coenzyme A hydrolase</fullName>
        <shortName>HIB-CoA hydrolase</shortName>
        <shortName>HIBYL-CoA-H</shortName>
    </alternativeName>
</protein>
<name>HIBCH_DICDI</name>
<comment type="function">
    <text evidence="1">Hydrolyzes 3-hydroxyisobutyryl-CoA (HIBYL-CoA), a saline catabolite.</text>
</comment>
<comment type="catalytic activity">
    <reaction>
        <text>3-hydroxy-2-methylpropanoyl-CoA + H2O = 3-hydroxy-2-methylpropanoate + CoA + H(+)</text>
        <dbReference type="Rhea" id="RHEA:20888"/>
        <dbReference type="ChEBI" id="CHEBI:11805"/>
        <dbReference type="ChEBI" id="CHEBI:15377"/>
        <dbReference type="ChEBI" id="CHEBI:15378"/>
        <dbReference type="ChEBI" id="CHEBI:57287"/>
        <dbReference type="ChEBI" id="CHEBI:57340"/>
        <dbReference type="EC" id="3.1.2.4"/>
    </reaction>
</comment>
<comment type="pathway">
    <text>Amino-acid degradation; L-valine degradation.</text>
</comment>
<comment type="subcellular location">
    <subcellularLocation>
        <location evidence="1">Mitochondrion</location>
    </subcellularLocation>
</comment>
<comment type="similarity">
    <text evidence="3">Belongs to the enoyl-CoA hydratase/isomerase family.</text>
</comment>
<evidence type="ECO:0000250" key="1"/>
<evidence type="ECO:0000255" key="2"/>
<evidence type="ECO:0000305" key="3"/>
<proteinExistence type="inferred from homology"/>
<feature type="transit peptide" description="Mitochondrion" evidence="2">
    <location>
        <begin position="1"/>
        <end position="25"/>
    </location>
</feature>
<feature type="chain" id="PRO_0000327927" description="3-hydroxyisobutyryl-CoA hydrolase, mitochondrial">
    <location>
        <begin position="26"/>
        <end position="381"/>
    </location>
</feature>
<feature type="binding site" evidence="1">
    <location>
        <position position="116"/>
    </location>
    <ligand>
        <name>substrate</name>
    </ligand>
</feature>
<feature type="binding site" evidence="1">
    <location>
        <position position="141"/>
    </location>
    <ligand>
        <name>substrate</name>
    </ligand>
</feature>
<feature type="binding site" evidence="1">
    <location>
        <position position="164"/>
    </location>
    <ligand>
        <name>substrate</name>
    </ligand>
</feature>
<feature type="binding site" evidence="1">
    <location>
        <position position="172"/>
    </location>
    <ligand>
        <name>substrate</name>
    </ligand>
</feature>